<keyword id="KW-0067">ATP-binding</keyword>
<keyword id="KW-0963">Cytoplasm</keyword>
<keyword id="KW-0418">Kinase</keyword>
<keyword id="KW-0547">Nucleotide-binding</keyword>
<keyword id="KW-0665">Pyrimidine biosynthesis</keyword>
<keyword id="KW-0808">Transferase</keyword>
<organism>
    <name type="scientific">Neorickettsia sennetsu (strain ATCC VR-367 / Miyayama)</name>
    <name type="common">Ehrlichia sennetsu</name>
    <dbReference type="NCBI Taxonomy" id="222891"/>
    <lineage>
        <taxon>Bacteria</taxon>
        <taxon>Pseudomonadati</taxon>
        <taxon>Pseudomonadota</taxon>
        <taxon>Alphaproteobacteria</taxon>
        <taxon>Rickettsiales</taxon>
        <taxon>Anaplasmataceae</taxon>
        <taxon>Neorickettsia</taxon>
    </lineage>
</organism>
<comment type="function">
    <text evidence="1">Catalyzes the reversible phosphorylation of UMP to UDP.</text>
</comment>
<comment type="catalytic activity">
    <reaction evidence="1">
        <text>UMP + ATP = UDP + ADP</text>
        <dbReference type="Rhea" id="RHEA:24400"/>
        <dbReference type="ChEBI" id="CHEBI:30616"/>
        <dbReference type="ChEBI" id="CHEBI:57865"/>
        <dbReference type="ChEBI" id="CHEBI:58223"/>
        <dbReference type="ChEBI" id="CHEBI:456216"/>
        <dbReference type="EC" id="2.7.4.22"/>
    </reaction>
</comment>
<comment type="activity regulation">
    <text evidence="1">Inhibited by UTP.</text>
</comment>
<comment type="pathway">
    <text evidence="1">Pyrimidine metabolism; CTP biosynthesis via de novo pathway; UDP from UMP (UMPK route): step 1/1.</text>
</comment>
<comment type="subunit">
    <text evidence="1">Homohexamer.</text>
</comment>
<comment type="subcellular location">
    <subcellularLocation>
        <location evidence="1">Cytoplasm</location>
    </subcellularLocation>
</comment>
<comment type="similarity">
    <text evidence="1">Belongs to the UMP kinase family.</text>
</comment>
<accession>Q2GCI6</accession>
<sequence>MRRVLLKISGERLAARGVSVHDAEVIGMLARGIKRVHEMGIQVCLVIGGGNIYRGSSGIPNIDRATGDYMGMLATVINALALQGAINNLGVVSRVQSAIPMRSICEPYVRQKAISHMEKNRIVIFAAGTGNPFFTTDTAAVLRSVEMGCDVMLKGTLVDGIYSDDPRTNINAERITKLSYTDVLSKKLRVLDSSAVSIARDNGMPVVIFSLDSEMAFYEVINKQGNYSTIEGE</sequence>
<name>PYRH_NEOSM</name>
<gene>
    <name evidence="1" type="primary">pyrH</name>
    <name type="ordered locus">NSE_0946</name>
</gene>
<proteinExistence type="inferred from homology"/>
<dbReference type="EC" id="2.7.4.22" evidence="1"/>
<dbReference type="EMBL" id="CP000237">
    <property type="protein sequence ID" value="ABD46128.1"/>
    <property type="molecule type" value="Genomic_DNA"/>
</dbReference>
<dbReference type="RefSeq" id="WP_011452316.1">
    <property type="nucleotide sequence ID" value="NC_007798.1"/>
</dbReference>
<dbReference type="SMR" id="Q2GCI6"/>
<dbReference type="STRING" id="222891.NSE_0946"/>
<dbReference type="KEGG" id="nse:NSE_0946"/>
<dbReference type="eggNOG" id="COG0528">
    <property type="taxonomic scope" value="Bacteria"/>
</dbReference>
<dbReference type="HOGENOM" id="CLU_033861_0_0_5"/>
<dbReference type="OrthoDB" id="9807458at2"/>
<dbReference type="UniPathway" id="UPA00159">
    <property type="reaction ID" value="UER00275"/>
</dbReference>
<dbReference type="Proteomes" id="UP000001942">
    <property type="component" value="Chromosome"/>
</dbReference>
<dbReference type="GO" id="GO:0005829">
    <property type="term" value="C:cytosol"/>
    <property type="evidence" value="ECO:0007669"/>
    <property type="project" value="TreeGrafter"/>
</dbReference>
<dbReference type="GO" id="GO:0005524">
    <property type="term" value="F:ATP binding"/>
    <property type="evidence" value="ECO:0007669"/>
    <property type="project" value="UniProtKB-KW"/>
</dbReference>
<dbReference type="GO" id="GO:0033862">
    <property type="term" value="F:UMP kinase activity"/>
    <property type="evidence" value="ECO:0007669"/>
    <property type="project" value="UniProtKB-EC"/>
</dbReference>
<dbReference type="GO" id="GO:0044210">
    <property type="term" value="P:'de novo' CTP biosynthetic process"/>
    <property type="evidence" value="ECO:0007669"/>
    <property type="project" value="UniProtKB-UniRule"/>
</dbReference>
<dbReference type="GO" id="GO:0006225">
    <property type="term" value="P:UDP biosynthetic process"/>
    <property type="evidence" value="ECO:0007669"/>
    <property type="project" value="TreeGrafter"/>
</dbReference>
<dbReference type="CDD" id="cd04254">
    <property type="entry name" value="AAK_UMPK-PyrH-Ec"/>
    <property type="match status" value="1"/>
</dbReference>
<dbReference type="FunFam" id="3.40.1160.10:FF:000001">
    <property type="entry name" value="Uridylate kinase"/>
    <property type="match status" value="1"/>
</dbReference>
<dbReference type="Gene3D" id="3.40.1160.10">
    <property type="entry name" value="Acetylglutamate kinase-like"/>
    <property type="match status" value="1"/>
</dbReference>
<dbReference type="HAMAP" id="MF_01220_B">
    <property type="entry name" value="PyrH_B"/>
    <property type="match status" value="1"/>
</dbReference>
<dbReference type="InterPro" id="IPR036393">
    <property type="entry name" value="AceGlu_kinase-like_sf"/>
</dbReference>
<dbReference type="InterPro" id="IPR001048">
    <property type="entry name" value="Asp/Glu/Uridylate_kinase"/>
</dbReference>
<dbReference type="InterPro" id="IPR011817">
    <property type="entry name" value="Uridylate_kinase"/>
</dbReference>
<dbReference type="InterPro" id="IPR015963">
    <property type="entry name" value="Uridylate_kinase_bac"/>
</dbReference>
<dbReference type="NCBIfam" id="TIGR02075">
    <property type="entry name" value="pyrH_bact"/>
    <property type="match status" value="1"/>
</dbReference>
<dbReference type="PANTHER" id="PTHR42833">
    <property type="entry name" value="URIDYLATE KINASE"/>
    <property type="match status" value="1"/>
</dbReference>
<dbReference type="PANTHER" id="PTHR42833:SF4">
    <property type="entry name" value="URIDYLATE KINASE PUMPKIN, CHLOROPLASTIC"/>
    <property type="match status" value="1"/>
</dbReference>
<dbReference type="Pfam" id="PF00696">
    <property type="entry name" value="AA_kinase"/>
    <property type="match status" value="1"/>
</dbReference>
<dbReference type="PIRSF" id="PIRSF005650">
    <property type="entry name" value="Uridylate_kin"/>
    <property type="match status" value="1"/>
</dbReference>
<dbReference type="SUPFAM" id="SSF53633">
    <property type="entry name" value="Carbamate kinase-like"/>
    <property type="match status" value="1"/>
</dbReference>
<feature type="chain" id="PRO_0000323901" description="Uridylate kinase">
    <location>
        <begin position="1"/>
        <end position="233"/>
    </location>
</feature>
<feature type="binding site" evidence="1">
    <location>
        <begin position="7"/>
        <end position="10"/>
    </location>
    <ligand>
        <name>ATP</name>
        <dbReference type="ChEBI" id="CHEBI:30616"/>
    </ligand>
</feature>
<feature type="binding site" evidence="1">
    <location>
        <position position="49"/>
    </location>
    <ligand>
        <name>UMP</name>
        <dbReference type="ChEBI" id="CHEBI:57865"/>
    </ligand>
</feature>
<feature type="binding site" evidence="1">
    <location>
        <position position="50"/>
    </location>
    <ligand>
        <name>ATP</name>
        <dbReference type="ChEBI" id="CHEBI:30616"/>
    </ligand>
</feature>
<feature type="binding site" evidence="1">
    <location>
        <position position="54"/>
    </location>
    <ligand>
        <name>ATP</name>
        <dbReference type="ChEBI" id="CHEBI:30616"/>
    </ligand>
</feature>
<feature type="binding site" evidence="1">
    <location>
        <position position="68"/>
    </location>
    <ligand>
        <name>UMP</name>
        <dbReference type="ChEBI" id="CHEBI:57865"/>
    </ligand>
</feature>
<feature type="binding site" evidence="1">
    <location>
        <begin position="129"/>
        <end position="136"/>
    </location>
    <ligand>
        <name>UMP</name>
        <dbReference type="ChEBI" id="CHEBI:57865"/>
    </ligand>
</feature>
<feature type="binding site" evidence="1">
    <location>
        <position position="156"/>
    </location>
    <ligand>
        <name>ATP</name>
        <dbReference type="ChEBI" id="CHEBI:30616"/>
    </ligand>
</feature>
<feature type="binding site" evidence="1">
    <location>
        <position position="162"/>
    </location>
    <ligand>
        <name>ATP</name>
        <dbReference type="ChEBI" id="CHEBI:30616"/>
    </ligand>
</feature>
<feature type="binding site" evidence="1">
    <location>
        <position position="165"/>
    </location>
    <ligand>
        <name>ATP</name>
        <dbReference type="ChEBI" id="CHEBI:30616"/>
    </ligand>
</feature>
<protein>
    <recommendedName>
        <fullName evidence="1">Uridylate kinase</fullName>
        <shortName evidence="1">UK</shortName>
        <ecNumber evidence="1">2.7.4.22</ecNumber>
    </recommendedName>
    <alternativeName>
        <fullName evidence="1">Uridine monophosphate kinase</fullName>
        <shortName evidence="1">UMP kinase</shortName>
        <shortName evidence="1">UMPK</shortName>
    </alternativeName>
</protein>
<reference key="1">
    <citation type="journal article" date="2006" name="PLoS Genet.">
        <title>Comparative genomics of emerging human ehrlichiosis agents.</title>
        <authorList>
            <person name="Dunning Hotopp J.C."/>
            <person name="Lin M."/>
            <person name="Madupu R."/>
            <person name="Crabtree J."/>
            <person name="Angiuoli S.V."/>
            <person name="Eisen J.A."/>
            <person name="Seshadri R."/>
            <person name="Ren Q."/>
            <person name="Wu M."/>
            <person name="Utterback T.R."/>
            <person name="Smith S."/>
            <person name="Lewis M."/>
            <person name="Khouri H."/>
            <person name="Zhang C."/>
            <person name="Niu H."/>
            <person name="Lin Q."/>
            <person name="Ohashi N."/>
            <person name="Zhi N."/>
            <person name="Nelson W.C."/>
            <person name="Brinkac L.M."/>
            <person name="Dodson R.J."/>
            <person name="Rosovitz M.J."/>
            <person name="Sundaram J.P."/>
            <person name="Daugherty S.C."/>
            <person name="Davidsen T."/>
            <person name="Durkin A.S."/>
            <person name="Gwinn M.L."/>
            <person name="Haft D.H."/>
            <person name="Selengut J.D."/>
            <person name="Sullivan S.A."/>
            <person name="Zafar N."/>
            <person name="Zhou L."/>
            <person name="Benahmed F."/>
            <person name="Forberger H."/>
            <person name="Halpin R."/>
            <person name="Mulligan S."/>
            <person name="Robinson J."/>
            <person name="White O."/>
            <person name="Rikihisa Y."/>
            <person name="Tettelin H."/>
        </authorList>
    </citation>
    <scope>NUCLEOTIDE SEQUENCE [LARGE SCALE GENOMIC DNA]</scope>
    <source>
        <strain>ATCC VR-367 / Miyayama</strain>
    </source>
</reference>
<evidence type="ECO:0000255" key="1">
    <source>
        <dbReference type="HAMAP-Rule" id="MF_01220"/>
    </source>
</evidence>